<accession>Q9AW90</accession>
<reference key="1">
    <citation type="journal article" date="2000" name="Proc. Natl. Acad. Sci. U.S.A.">
        <title>Chloroplast protein and centrosomal genes, a tRNA intron, and odd telomeres in an unusually compact eukaryotic genome, the cryptomonad nucleomorph.</title>
        <authorList>
            <person name="Zauner S."/>
            <person name="Fraunholz M."/>
            <person name="Wastl J."/>
            <person name="Penny S.L."/>
            <person name="Beaton M."/>
            <person name="Cavalier-Smith T."/>
            <person name="Maier U.-G."/>
            <person name="Douglas S.E."/>
        </authorList>
    </citation>
    <scope>NUCLEOTIDE SEQUENCE [LARGE SCALE GENOMIC DNA]</scope>
</reference>
<reference key="2">
    <citation type="journal article" date="2001" name="Nature">
        <title>The highly reduced genome of an enslaved algal nucleus.</title>
        <authorList>
            <person name="Douglas S.E."/>
            <person name="Zauner S."/>
            <person name="Fraunholz M."/>
            <person name="Beaton M."/>
            <person name="Penny S.L."/>
            <person name="Deng L.-T."/>
            <person name="Wu X."/>
            <person name="Reith M.E."/>
            <person name="Cavalier-Smith T."/>
            <person name="Maier U.-G."/>
        </authorList>
    </citation>
    <scope>NUCLEOTIDE SEQUENCE [LARGE SCALE GENOMIC DNA]</scope>
</reference>
<name>RS3A_GUITH</name>
<evidence type="ECO:0000255" key="1">
    <source>
        <dbReference type="HAMAP-Rule" id="MF_03122"/>
    </source>
</evidence>
<evidence type="ECO:0000305" key="2"/>
<feature type="initiator methionine" description="Removed" evidence="1">
    <location>
        <position position="1"/>
    </location>
</feature>
<feature type="chain" id="PRO_0000389343" description="Small ribosomal subunit protein eS1">
    <location>
        <begin position="2"/>
        <end position="219"/>
    </location>
</feature>
<keyword id="KW-0963">Cytoplasm</keyword>
<keyword id="KW-0687">Ribonucleoprotein</keyword>
<keyword id="KW-0689">Ribosomal protein</keyword>
<sequence length="219" mass="25605">MSINKNKNLSSIKNKKNQDVNSRQELIKVYAPDIFDSKLIGKTLIKKRNPADENSSVDNKIYQVSLADILGKEEFSSINFNFKSLKIFNNECFTKFHGLTLTRDKICSLIKKWHTLIEVEVNFKTKDGYFLKLFLIAQSKKPKNMKSKTVYINSSQKRALRRRITDIIIKEGINMDIKDFIHRIYSLKIYEKIEINCSKIFPIHQVNIRKIKVVENSTL</sequence>
<organism>
    <name type="scientific">Guillardia theta</name>
    <name type="common">Cryptophyte</name>
    <name type="synonym">Cryptomonas phi</name>
    <dbReference type="NCBI Taxonomy" id="55529"/>
    <lineage>
        <taxon>Eukaryota</taxon>
        <taxon>Cryptophyceae</taxon>
        <taxon>Pyrenomonadales</taxon>
        <taxon>Geminigeraceae</taxon>
        <taxon>Guillardia</taxon>
    </lineage>
</organism>
<dbReference type="EMBL" id="AJ010592">
    <property type="protein sequence ID" value="CAC26979.1"/>
    <property type="molecule type" value="Genomic_DNA"/>
</dbReference>
<dbReference type="PIR" id="F90103">
    <property type="entry name" value="F90103"/>
</dbReference>
<dbReference type="RefSeq" id="XP_001713190.1">
    <property type="nucleotide sequence ID" value="XM_001713138.1"/>
</dbReference>
<dbReference type="SMR" id="Q9AW90"/>
<dbReference type="GeneID" id="857515"/>
<dbReference type="Proteomes" id="UP000242167">
    <property type="component" value="Chromosome 2"/>
</dbReference>
<dbReference type="GO" id="GO:0022627">
    <property type="term" value="C:cytosolic small ribosomal subunit"/>
    <property type="evidence" value="ECO:0007669"/>
    <property type="project" value="UniProtKB-UniRule"/>
</dbReference>
<dbReference type="GO" id="GO:0003735">
    <property type="term" value="F:structural constituent of ribosome"/>
    <property type="evidence" value="ECO:0007669"/>
    <property type="project" value="UniProtKB-UniRule"/>
</dbReference>
<dbReference type="GO" id="GO:0006412">
    <property type="term" value="P:translation"/>
    <property type="evidence" value="ECO:0007669"/>
    <property type="project" value="UniProtKB-UniRule"/>
</dbReference>
<dbReference type="HAMAP" id="MF_03122">
    <property type="entry name" value="Ribosomal_eS1_euk"/>
    <property type="match status" value="1"/>
</dbReference>
<dbReference type="InterPro" id="IPR001593">
    <property type="entry name" value="Ribosomal_eS1"/>
</dbReference>
<dbReference type="InterPro" id="IPR027500">
    <property type="entry name" value="Ribosomal_eS1_euk"/>
</dbReference>
<dbReference type="PANTHER" id="PTHR11830">
    <property type="entry name" value="40S RIBOSOMAL PROTEIN S3A"/>
    <property type="match status" value="1"/>
</dbReference>
<dbReference type="Pfam" id="PF01015">
    <property type="entry name" value="Ribosomal_S3Ae"/>
    <property type="match status" value="1"/>
</dbReference>
<dbReference type="SMART" id="SM01397">
    <property type="entry name" value="Ribosomal_S3Ae"/>
    <property type="match status" value="1"/>
</dbReference>
<comment type="subunit">
    <text evidence="1">Component of the small ribosomal subunit. Mature ribosomes consist of a small (40S) and a large (60S) subunit. The 40S subunit contains about 33 different proteins and 1 molecule of RNA (18S). The 60S subunit contains about 49 different proteins and 3 molecules of RNA (25S, 5.8S and 5S).</text>
</comment>
<comment type="subcellular location">
    <subcellularLocation>
        <location evidence="1">Cytoplasm</location>
    </subcellularLocation>
</comment>
<comment type="similarity">
    <text evidence="1">Belongs to the eukaryotic ribosomal protein eS1 family.</text>
</comment>
<protein>
    <recommendedName>
        <fullName evidence="1">Small ribosomal subunit protein eS1</fullName>
    </recommendedName>
    <alternativeName>
        <fullName evidence="2">40S ribosomal protein S3a</fullName>
    </alternativeName>
</protein>
<proteinExistence type="inferred from homology"/>